<reference key="1">
    <citation type="journal article" date="2001" name="J. Immunol.">
        <title>Comparison of chimpanzee and human leukocyte Ig-like receptor genes reveals framework and rapidly evolving genes.</title>
        <authorList>
            <person name="Canavez F.C."/>
            <person name="Young N.T."/>
            <person name="Guethlein L.A."/>
            <person name="Rajalingam R."/>
            <person name="Khakoo S.I."/>
            <person name="Shum B.P."/>
            <person name="Parham P."/>
        </authorList>
    </citation>
    <scope>NUCLEOTIDE SEQUENCE [MRNA]</scope>
</reference>
<sequence length="481" mass="52438">MTPALTALLCLGLSLGPRTHVQAGPLPKPTLWAEPGSVISWRSPVTIWCQGSLEAQEYRLYKEGSREPRDTQNPMEPKNKARFSIPSMTEHHAGRYRCYYRSPAGWSEPSDPLELVVTGFYSTPTLSALPSPVVASGGNVTLRCGSQKGYDHFVLMKEGEHQLPQTLDSQHLHSGGFQALFPVGPVTPSHRWTFTCYGSYRNTPQVWSHPSDPLEILPSGVSRKPSLLTLQGPVLAPGESLTLQCGSDVGYDRFTLYKEGERDFLQLPGPQPQAGLSQANFTLGPVSRSHGGQYRCYGAHNLSSEWSAPSDPLNILIAGQFYDRVSLSLQPDPTVASGENVTLLCQSQGQFDTFLLTKEGAAHPPLRLRSKYQSQKYQAEFPMNPVTSAHAGTYRCYGSYSSNPHLLSFPSDPLKLMVSGPSGGPSLPPTGPPSTPASHAKDYTVENLIRMGMAGLVLVVLGILLFEAQHSQRSPQDAARR</sequence>
<feature type="signal peptide" evidence="3">
    <location>
        <begin position="1"/>
        <end position="23"/>
    </location>
</feature>
<feature type="chain" id="PRO_0000294368" description="Leukocyte immunoglobulin-like receptor subfamily A member 6">
    <location>
        <begin position="24"/>
        <end position="481"/>
    </location>
</feature>
<feature type="topological domain" description="Extracellular" evidence="3">
    <location>
        <begin position="24"/>
        <end position="447"/>
    </location>
</feature>
<feature type="transmembrane region" description="Helical" evidence="3">
    <location>
        <begin position="448"/>
        <end position="468"/>
    </location>
</feature>
<feature type="topological domain" description="Cytoplasmic" evidence="3">
    <location>
        <begin position="469"/>
        <end position="481"/>
    </location>
</feature>
<feature type="domain" description="Ig-like C2-type 1">
    <location>
        <begin position="24"/>
        <end position="118"/>
    </location>
</feature>
<feature type="domain" description="Ig-like C2-type 2">
    <location>
        <begin position="225"/>
        <end position="314"/>
    </location>
</feature>
<feature type="domain" description="Ig-like C2-type 3">
    <location>
        <begin position="323"/>
        <end position="408"/>
    </location>
</feature>
<feature type="region of interest" description="Disordered" evidence="5">
    <location>
        <begin position="418"/>
        <end position="439"/>
    </location>
</feature>
<feature type="compositionally biased region" description="Pro residues" evidence="5">
    <location>
        <begin position="426"/>
        <end position="435"/>
    </location>
</feature>
<feature type="glycosylation site" description="N-linked (GlcNAc...) asparagine" evidence="3">
    <location>
        <position position="139"/>
    </location>
</feature>
<feature type="glycosylation site" description="N-linked (GlcNAc...) asparagine" evidence="3">
    <location>
        <position position="301"/>
    </location>
</feature>
<feature type="glycosylation site" description="N-linked (GlcNAc...) asparagine" evidence="3">
    <location>
        <position position="340"/>
    </location>
</feature>
<feature type="disulfide bond" evidence="4">
    <location>
        <begin position="49"/>
        <end position="98"/>
    </location>
</feature>
<feature type="disulfide bond" evidence="2">
    <location>
        <begin position="144"/>
        <end position="196"/>
    </location>
</feature>
<feature type="disulfide bond" evidence="4">
    <location>
        <begin position="245"/>
        <end position="296"/>
    </location>
</feature>
<feature type="disulfide bond" evidence="4">
    <location>
        <begin position="345"/>
        <end position="396"/>
    </location>
</feature>
<proteinExistence type="evidence at transcript level"/>
<evidence type="ECO:0000250" key="1"/>
<evidence type="ECO:0000250" key="2">
    <source>
        <dbReference type="UniProtKB" id="Q8NHL6"/>
    </source>
</evidence>
<evidence type="ECO:0000255" key="3"/>
<evidence type="ECO:0000255" key="4">
    <source>
        <dbReference type="PROSITE-ProRule" id="PRU00114"/>
    </source>
</evidence>
<evidence type="ECO:0000256" key="5">
    <source>
        <dbReference type="SAM" id="MobiDB-lite"/>
    </source>
</evidence>
<evidence type="ECO:0000305" key="6"/>
<organism>
    <name type="scientific">Pan troglodytes</name>
    <name type="common">Chimpanzee</name>
    <dbReference type="NCBI Taxonomy" id="9598"/>
    <lineage>
        <taxon>Eukaryota</taxon>
        <taxon>Metazoa</taxon>
        <taxon>Chordata</taxon>
        <taxon>Craniata</taxon>
        <taxon>Vertebrata</taxon>
        <taxon>Euteleostomi</taxon>
        <taxon>Mammalia</taxon>
        <taxon>Eutheria</taxon>
        <taxon>Euarchontoglires</taxon>
        <taxon>Primates</taxon>
        <taxon>Haplorrhini</taxon>
        <taxon>Catarrhini</taxon>
        <taxon>Hominidae</taxon>
        <taxon>Pan</taxon>
    </lineage>
</organism>
<comment type="function">
    <text evidence="1">May act as receptor for class I MHC antigens.</text>
</comment>
<comment type="subcellular location">
    <subcellularLocation>
        <location evidence="6">Membrane</location>
        <topology evidence="6">Single-pass type I membrane protein</topology>
    </subcellularLocation>
</comment>
<accession>Q8MJZ2</accession>
<keyword id="KW-1064">Adaptive immunity</keyword>
<keyword id="KW-1015">Disulfide bond</keyword>
<keyword id="KW-0325">Glycoprotein</keyword>
<keyword id="KW-0391">Immunity</keyword>
<keyword id="KW-0393">Immunoglobulin domain</keyword>
<keyword id="KW-0472">Membrane</keyword>
<keyword id="KW-0675">Receptor</keyword>
<keyword id="KW-1185">Reference proteome</keyword>
<keyword id="KW-0677">Repeat</keyword>
<keyword id="KW-0732">Signal</keyword>
<keyword id="KW-0812">Transmembrane</keyword>
<keyword id="KW-1133">Transmembrane helix</keyword>
<name>LIRA6_PANTR</name>
<dbReference type="EMBL" id="AF383169">
    <property type="protein sequence ID" value="AAL31878.1"/>
    <property type="molecule type" value="mRNA"/>
</dbReference>
<dbReference type="RefSeq" id="NP_001009056.1">
    <property type="nucleotide sequence ID" value="NM_001009056.1"/>
</dbReference>
<dbReference type="SMR" id="Q8MJZ2"/>
<dbReference type="FunCoup" id="Q8MJZ2">
    <property type="interactions" value="30"/>
</dbReference>
<dbReference type="STRING" id="9598.ENSPTRP00000054294"/>
<dbReference type="GlyCosmos" id="Q8MJZ2">
    <property type="glycosylation" value="3 sites, No reported glycans"/>
</dbReference>
<dbReference type="PaxDb" id="9598-ENSPTRP00000054294"/>
<dbReference type="Ensembl" id="ENSPTRT00000061751.4">
    <property type="protein sequence ID" value="ENSPTRP00000054294.3"/>
    <property type="gene ID" value="ENSPTRG00000028888.5"/>
</dbReference>
<dbReference type="GeneID" id="450148"/>
<dbReference type="KEGG" id="ptr:450148"/>
<dbReference type="CTD" id="79168"/>
<dbReference type="eggNOG" id="ENOG502RYEX">
    <property type="taxonomic scope" value="Eukaryota"/>
</dbReference>
<dbReference type="GeneTree" id="ENSGT01100000263478"/>
<dbReference type="HOGENOM" id="CLU_021100_2_3_1"/>
<dbReference type="InParanoid" id="Q8MJZ2"/>
<dbReference type="OMA" id="NIAIQCH"/>
<dbReference type="OrthoDB" id="13637at9604"/>
<dbReference type="TreeFam" id="TF336644"/>
<dbReference type="Proteomes" id="UP000002277">
    <property type="component" value="Chromosome 19"/>
</dbReference>
<dbReference type="Bgee" id="ENSPTRG00000028888">
    <property type="expression patterns" value="Expressed in bone marrow and 9 other cell types or tissues"/>
</dbReference>
<dbReference type="GO" id="GO:0005886">
    <property type="term" value="C:plasma membrane"/>
    <property type="evidence" value="ECO:0000318"/>
    <property type="project" value="GO_Central"/>
</dbReference>
<dbReference type="GO" id="GO:0032396">
    <property type="term" value="F:inhibitory MHC class I receptor activity"/>
    <property type="evidence" value="ECO:0000318"/>
    <property type="project" value="GO_Central"/>
</dbReference>
<dbReference type="GO" id="GO:0002250">
    <property type="term" value="P:adaptive immune response"/>
    <property type="evidence" value="ECO:0007669"/>
    <property type="project" value="UniProtKB-KW"/>
</dbReference>
<dbReference type="GO" id="GO:0019221">
    <property type="term" value="P:cytokine-mediated signaling pathway"/>
    <property type="evidence" value="ECO:0000318"/>
    <property type="project" value="GO_Central"/>
</dbReference>
<dbReference type="GO" id="GO:0002764">
    <property type="term" value="P:immune response-regulating signaling pathway"/>
    <property type="evidence" value="ECO:0000318"/>
    <property type="project" value="GO_Central"/>
</dbReference>
<dbReference type="CDD" id="cd05751">
    <property type="entry name" value="IgC2_D1_LILR_KIR_like"/>
    <property type="match status" value="1"/>
</dbReference>
<dbReference type="FunFam" id="2.60.40.10:FF:000049">
    <property type="entry name" value="Leukocyte immunoglobulin-like receptor subfamily B member 1"/>
    <property type="match status" value="4"/>
</dbReference>
<dbReference type="Gene3D" id="2.60.40.10">
    <property type="entry name" value="Immunoglobulins"/>
    <property type="match status" value="4"/>
</dbReference>
<dbReference type="InterPro" id="IPR016332">
    <property type="entry name" value="A1B_glyco/leuk_Ig-like_rcpt"/>
</dbReference>
<dbReference type="InterPro" id="IPR007110">
    <property type="entry name" value="Ig-like_dom"/>
</dbReference>
<dbReference type="InterPro" id="IPR036179">
    <property type="entry name" value="Ig-like_dom_sf"/>
</dbReference>
<dbReference type="InterPro" id="IPR013783">
    <property type="entry name" value="Ig-like_fold"/>
</dbReference>
<dbReference type="InterPro" id="IPR050412">
    <property type="entry name" value="Ig-like_Receptors_ImmuneReg"/>
</dbReference>
<dbReference type="InterPro" id="IPR003599">
    <property type="entry name" value="Ig_sub"/>
</dbReference>
<dbReference type="InterPro" id="IPR003598">
    <property type="entry name" value="Ig_sub2"/>
</dbReference>
<dbReference type="InterPro" id="IPR013151">
    <property type="entry name" value="Immunoglobulin_dom"/>
</dbReference>
<dbReference type="PANTHER" id="PTHR11738:SF187">
    <property type="entry name" value="LEUKOCYTE IMMUNOGLOBULIN-LIKE RECEPTOR SUBFAMILY A MEMBER 6-RELATED"/>
    <property type="match status" value="1"/>
</dbReference>
<dbReference type="PANTHER" id="PTHR11738">
    <property type="entry name" value="MHC CLASS I NK CELL RECEPTOR"/>
    <property type="match status" value="1"/>
</dbReference>
<dbReference type="Pfam" id="PF00047">
    <property type="entry name" value="ig"/>
    <property type="match status" value="2"/>
</dbReference>
<dbReference type="Pfam" id="PF13895">
    <property type="entry name" value="Ig_2"/>
    <property type="match status" value="1"/>
</dbReference>
<dbReference type="PIRSF" id="PIRSF001979">
    <property type="entry name" value="Alpha_1B_glycoprot_prd"/>
    <property type="match status" value="1"/>
</dbReference>
<dbReference type="SMART" id="SM00409">
    <property type="entry name" value="IG"/>
    <property type="match status" value="4"/>
</dbReference>
<dbReference type="SMART" id="SM00408">
    <property type="entry name" value="IGc2"/>
    <property type="match status" value="4"/>
</dbReference>
<dbReference type="SUPFAM" id="SSF48726">
    <property type="entry name" value="Immunoglobulin"/>
    <property type="match status" value="4"/>
</dbReference>
<dbReference type="PROSITE" id="PS50835">
    <property type="entry name" value="IG_LIKE"/>
    <property type="match status" value="1"/>
</dbReference>
<protein>
    <recommendedName>
        <fullName>Leukocyte immunoglobulin-like receptor subfamily A member 6</fullName>
        <shortName>Leukocyte immunoglobulin-like receptor E</shortName>
    </recommendedName>
</protein>
<gene>
    <name type="primary">LILRA6</name>
    <name type="synonym">LIRE</name>
</gene>